<protein>
    <recommendedName>
        <fullName evidence="3">Conotoxin Cltx-4</fullName>
    </recommendedName>
    <alternativeName>
        <fullName evidence="4">CalXXIXA</fullName>
    </alternativeName>
</protein>
<name>CUX4_CONCL</name>
<accession>P0DJB5</accession>
<feature type="peptide" id="PRO_0000415051" description="Conotoxin Cltx-4" evidence="2">
    <location>
        <begin position="1"/>
        <end position="32"/>
    </location>
</feature>
<feature type="modified residue" description="4-hydroxyproline" evidence="5">
    <location>
        <position position="2"/>
    </location>
</feature>
<feature type="modified residue" description="4-hydroxyproline" evidence="5">
    <location>
        <position position="24"/>
    </location>
</feature>
<feature type="modified residue" description="4-hydroxyproline" evidence="5">
    <location>
        <position position="28"/>
    </location>
</feature>
<feature type="modified residue" description="4-hydroxyproline" evidence="5">
    <location>
        <position position="30"/>
    </location>
</feature>
<feature type="modified residue" description="Serine amide" evidence="5">
    <location>
        <position position="32"/>
    </location>
</feature>
<dbReference type="GO" id="GO:0005576">
    <property type="term" value="C:extracellular region"/>
    <property type="evidence" value="ECO:0007669"/>
    <property type="project" value="UniProtKB-SubCell"/>
</dbReference>
<dbReference type="GO" id="GO:0090729">
    <property type="term" value="F:toxin activity"/>
    <property type="evidence" value="ECO:0007669"/>
    <property type="project" value="UniProtKB-KW"/>
</dbReference>
<organism>
    <name type="scientific">Californiconus californicus</name>
    <name type="common">California cone</name>
    <name type="synonym">Conus californicus</name>
    <dbReference type="NCBI Taxonomy" id="1736779"/>
    <lineage>
        <taxon>Eukaryota</taxon>
        <taxon>Metazoa</taxon>
        <taxon>Spiralia</taxon>
        <taxon>Lophotrochozoa</taxon>
        <taxon>Mollusca</taxon>
        <taxon>Gastropoda</taxon>
        <taxon>Caenogastropoda</taxon>
        <taxon>Neogastropoda</taxon>
        <taxon>Conoidea</taxon>
        <taxon>Conidae</taxon>
        <taxon>Californiconus</taxon>
    </lineage>
</organism>
<keyword id="KW-0027">Amidation</keyword>
<keyword id="KW-0903">Direct protein sequencing</keyword>
<keyword id="KW-1015">Disulfide bond</keyword>
<keyword id="KW-0379">Hydroxylation</keyword>
<keyword id="KW-0528">Neurotoxin</keyword>
<keyword id="KW-0964">Secreted</keyword>
<keyword id="KW-0800">Toxin</keyword>
<proteinExistence type="evidence at protein level"/>
<sequence length="32" mass="3490">RPKCCCVCGVVGRKCCSTWDKCHPVHLPCPSS</sequence>
<evidence type="ECO:0000250" key="1"/>
<evidence type="ECO:0000269" key="2">
    <source>
    </source>
</evidence>
<evidence type="ECO:0000303" key="3">
    <source>
    </source>
</evidence>
<evidence type="ECO:0000305" key="4"/>
<evidence type="ECO:0000305" key="5">
    <source>
    </source>
</evidence>
<comment type="subcellular location">
    <subcellularLocation>
        <location>Secreted</location>
    </subcellularLocation>
</comment>
<comment type="tissue specificity">
    <text>Expressed by the venom duct.</text>
</comment>
<comment type="domain">
    <text>The cysteine framework is XXIX (CCC-C-CC-C-C).</text>
</comment>
<comment type="PTM">
    <text evidence="1">Contains 4 disulfide bonds.</text>
</comment>
<reference key="1">
    <citation type="journal article" date="2010" name="Mol. Phylogenet. Evol.">
        <title>Evolution of Conus peptide toxins: analysis of Conus californicus Reeve, 1844.</title>
        <authorList>
            <person name="Biggs J.S."/>
            <person name="Watkins M."/>
            <person name="Puillandre N."/>
            <person name="Ownby J.P."/>
            <person name="Lopez-Vera E."/>
            <person name="Christensen S."/>
            <person name="Moreno K.J."/>
            <person name="Bernaldez J."/>
            <person name="Licea-Navarro A."/>
            <person name="Corneli P.S."/>
            <person name="Olivera B.M."/>
        </authorList>
    </citation>
    <scope>PROTEIN SEQUENCE</scope>
    <scope>HYDROXYLATION AT PRO-2; PRO-24; PRO-28 AND PRO-30</scope>
    <scope>AMIDATION AT SER-32</scope>
    <source>
        <tissue>Venom</tissue>
    </source>
</reference>